<reference key="1">
    <citation type="journal article" date="2002" name="Proc. Natl. Acad. Sci. U.S.A.">
        <title>Rice phosphate transporters include an evolutionarily divergent gene specifically activated in arbuscular mycorrhizal symbiosis.</title>
        <authorList>
            <person name="Paszkowski U."/>
            <person name="Kroken S."/>
            <person name="Roux C."/>
            <person name="Briggs S.P."/>
        </authorList>
    </citation>
    <scope>NUCLEOTIDE SEQUENCE [GENOMIC DNA]</scope>
    <scope>TISSUE SPECIFICITY</scope>
</reference>
<reference key="2">
    <citation type="submission" date="2004-03" db="EMBL/GenBank/DDBJ databases">
        <title>Regulation of rice phosphate transporter gene expression by phosphate availability.</title>
        <authorList>
            <person name="Baek S.-H."/>
            <person name="Kim H.-S."/>
            <person name="Yun S.J."/>
        </authorList>
    </citation>
    <scope>NUCLEOTIDE SEQUENCE [MRNA]</scope>
    <source>
        <strain>cv. Dongjin</strain>
    </source>
</reference>
<reference key="3">
    <citation type="journal article" date="2002" name="Nature">
        <title>Sequence and analysis of rice chromosome 4.</title>
        <authorList>
            <person name="Feng Q."/>
            <person name="Zhang Y."/>
            <person name="Hao P."/>
            <person name="Wang S."/>
            <person name="Fu G."/>
            <person name="Huang Y."/>
            <person name="Li Y."/>
            <person name="Zhu J."/>
            <person name="Liu Y."/>
            <person name="Hu X."/>
            <person name="Jia P."/>
            <person name="Zhang Y."/>
            <person name="Zhao Q."/>
            <person name="Ying K."/>
            <person name="Yu S."/>
            <person name="Tang Y."/>
            <person name="Weng Q."/>
            <person name="Zhang L."/>
            <person name="Lu Y."/>
            <person name="Mu J."/>
            <person name="Lu Y."/>
            <person name="Zhang L.S."/>
            <person name="Yu Z."/>
            <person name="Fan D."/>
            <person name="Liu X."/>
            <person name="Lu T."/>
            <person name="Li C."/>
            <person name="Wu Y."/>
            <person name="Sun T."/>
            <person name="Lei H."/>
            <person name="Li T."/>
            <person name="Hu H."/>
            <person name="Guan J."/>
            <person name="Wu M."/>
            <person name="Zhang R."/>
            <person name="Zhou B."/>
            <person name="Chen Z."/>
            <person name="Chen L."/>
            <person name="Jin Z."/>
            <person name="Wang R."/>
            <person name="Yin H."/>
            <person name="Cai Z."/>
            <person name="Ren S."/>
            <person name="Lv G."/>
            <person name="Gu W."/>
            <person name="Zhu G."/>
            <person name="Tu Y."/>
            <person name="Jia J."/>
            <person name="Zhang Y."/>
            <person name="Chen J."/>
            <person name="Kang H."/>
            <person name="Chen X."/>
            <person name="Shao C."/>
            <person name="Sun Y."/>
            <person name="Hu Q."/>
            <person name="Zhang X."/>
            <person name="Zhang W."/>
            <person name="Wang L."/>
            <person name="Ding C."/>
            <person name="Sheng H."/>
            <person name="Gu J."/>
            <person name="Chen S."/>
            <person name="Ni L."/>
            <person name="Zhu F."/>
            <person name="Chen W."/>
            <person name="Lan L."/>
            <person name="Lai Y."/>
            <person name="Cheng Z."/>
            <person name="Gu M."/>
            <person name="Jiang J."/>
            <person name="Li J."/>
            <person name="Hong G."/>
            <person name="Xue Y."/>
            <person name="Han B."/>
        </authorList>
    </citation>
    <scope>NUCLEOTIDE SEQUENCE [LARGE SCALE GENOMIC DNA]</scope>
    <source>
        <strain>cv. Nipponbare</strain>
    </source>
</reference>
<reference key="4">
    <citation type="journal article" date="2005" name="Nature">
        <title>The map-based sequence of the rice genome.</title>
        <authorList>
            <consortium name="International rice genome sequencing project (IRGSP)"/>
        </authorList>
    </citation>
    <scope>NUCLEOTIDE SEQUENCE [LARGE SCALE GENOMIC DNA]</scope>
    <source>
        <strain>cv. Nipponbare</strain>
    </source>
</reference>
<reference key="5">
    <citation type="journal article" date="2008" name="Nucleic Acids Res.">
        <title>The rice annotation project database (RAP-DB): 2008 update.</title>
        <authorList>
            <consortium name="The rice annotation project (RAP)"/>
        </authorList>
    </citation>
    <scope>GENOME REANNOTATION</scope>
    <source>
        <strain>cv. Nipponbare</strain>
    </source>
</reference>
<reference key="6">
    <citation type="journal article" date="2013" name="Rice">
        <title>Improvement of the Oryza sativa Nipponbare reference genome using next generation sequence and optical map data.</title>
        <authorList>
            <person name="Kawahara Y."/>
            <person name="de la Bastide M."/>
            <person name="Hamilton J.P."/>
            <person name="Kanamori H."/>
            <person name="McCombie W.R."/>
            <person name="Ouyang S."/>
            <person name="Schwartz D.C."/>
            <person name="Tanaka T."/>
            <person name="Wu J."/>
            <person name="Zhou S."/>
            <person name="Childs K.L."/>
            <person name="Davidson R.M."/>
            <person name="Lin H."/>
            <person name="Quesada-Ocampo L."/>
            <person name="Vaillancourt B."/>
            <person name="Sakai H."/>
            <person name="Lee S.S."/>
            <person name="Kim J."/>
            <person name="Numa H."/>
            <person name="Itoh T."/>
            <person name="Buell C.R."/>
            <person name="Matsumoto T."/>
        </authorList>
    </citation>
    <scope>GENOME REANNOTATION</scope>
    <source>
        <strain>cv. Nipponbare</strain>
    </source>
</reference>
<reference key="7">
    <citation type="journal article" date="2005" name="PLoS Biol.">
        <title>The genomes of Oryza sativa: a history of duplications.</title>
        <authorList>
            <person name="Yu J."/>
            <person name="Wang J."/>
            <person name="Lin W."/>
            <person name="Li S."/>
            <person name="Li H."/>
            <person name="Zhou J."/>
            <person name="Ni P."/>
            <person name="Dong W."/>
            <person name="Hu S."/>
            <person name="Zeng C."/>
            <person name="Zhang J."/>
            <person name="Zhang Y."/>
            <person name="Li R."/>
            <person name="Xu Z."/>
            <person name="Li S."/>
            <person name="Li X."/>
            <person name="Zheng H."/>
            <person name="Cong L."/>
            <person name="Lin L."/>
            <person name="Yin J."/>
            <person name="Geng J."/>
            <person name="Li G."/>
            <person name="Shi J."/>
            <person name="Liu J."/>
            <person name="Lv H."/>
            <person name="Li J."/>
            <person name="Wang J."/>
            <person name="Deng Y."/>
            <person name="Ran L."/>
            <person name="Shi X."/>
            <person name="Wang X."/>
            <person name="Wu Q."/>
            <person name="Li C."/>
            <person name="Ren X."/>
            <person name="Wang J."/>
            <person name="Wang X."/>
            <person name="Li D."/>
            <person name="Liu D."/>
            <person name="Zhang X."/>
            <person name="Ji Z."/>
            <person name="Zhao W."/>
            <person name="Sun Y."/>
            <person name="Zhang Z."/>
            <person name="Bao J."/>
            <person name="Han Y."/>
            <person name="Dong L."/>
            <person name="Ji J."/>
            <person name="Chen P."/>
            <person name="Wu S."/>
            <person name="Liu J."/>
            <person name="Xiao Y."/>
            <person name="Bu D."/>
            <person name="Tan J."/>
            <person name="Yang L."/>
            <person name="Ye C."/>
            <person name="Zhang J."/>
            <person name="Xu J."/>
            <person name="Zhou Y."/>
            <person name="Yu Y."/>
            <person name="Zhang B."/>
            <person name="Zhuang S."/>
            <person name="Wei H."/>
            <person name="Liu B."/>
            <person name="Lei M."/>
            <person name="Yu H."/>
            <person name="Li Y."/>
            <person name="Xu H."/>
            <person name="Wei S."/>
            <person name="He X."/>
            <person name="Fang L."/>
            <person name="Zhang Z."/>
            <person name="Zhang Y."/>
            <person name="Huang X."/>
            <person name="Su Z."/>
            <person name="Tong W."/>
            <person name="Li J."/>
            <person name="Tong Z."/>
            <person name="Li S."/>
            <person name="Ye J."/>
            <person name="Wang L."/>
            <person name="Fang L."/>
            <person name="Lei T."/>
            <person name="Chen C.-S."/>
            <person name="Chen H.-C."/>
            <person name="Xu Z."/>
            <person name="Li H."/>
            <person name="Huang H."/>
            <person name="Zhang F."/>
            <person name="Xu H."/>
            <person name="Li N."/>
            <person name="Zhao C."/>
            <person name="Li S."/>
            <person name="Dong L."/>
            <person name="Huang Y."/>
            <person name="Li L."/>
            <person name="Xi Y."/>
            <person name="Qi Q."/>
            <person name="Li W."/>
            <person name="Zhang B."/>
            <person name="Hu W."/>
            <person name="Zhang Y."/>
            <person name="Tian X."/>
            <person name="Jiao Y."/>
            <person name="Liang X."/>
            <person name="Jin J."/>
            <person name="Gao L."/>
            <person name="Zheng W."/>
            <person name="Hao B."/>
            <person name="Liu S.-M."/>
            <person name="Wang W."/>
            <person name="Yuan L."/>
            <person name="Cao M."/>
            <person name="McDermott J."/>
            <person name="Samudrala R."/>
            <person name="Wang J."/>
            <person name="Wong G.K.-S."/>
            <person name="Yang H."/>
        </authorList>
    </citation>
    <scope>NUCLEOTIDE SEQUENCE [LARGE SCALE GENOMIC DNA]</scope>
    <source>
        <strain>cv. Nipponbare</strain>
    </source>
</reference>
<reference key="8">
    <citation type="journal article" date="2008" name="Biotechnol. Lett.">
        <title>Increased expression of OsPT1, a high-affinity phosphate transporter, enhances phosphate acquisition in rice.</title>
        <authorList>
            <person name="Seo H.-M."/>
            <person name="Jung Y."/>
            <person name="Song S."/>
            <person name="Kim Y."/>
            <person name="Kwon T."/>
            <person name="Kim D.-H."/>
            <person name="Jeung S.-J."/>
            <person name="Yi Y.-B."/>
            <person name="Yi G."/>
            <person name="Nam M.-H."/>
            <person name="Nam J."/>
        </authorList>
    </citation>
    <scope>LACK OF INDUCTION</scope>
</reference>
<comment type="function">
    <text evidence="1">High-affinity transporter for external inorganic phosphate.</text>
</comment>
<comment type="subcellular location">
    <subcellularLocation>
        <location evidence="1">Membrane</location>
        <topology evidence="1">Multi-pass membrane protein</topology>
    </subcellularLocation>
</comment>
<comment type="tissue specificity">
    <text evidence="4">Expressed at low levels in roots.</text>
</comment>
<comment type="induction">
    <text>Not induced in roots by phosphate starvation.</text>
</comment>
<comment type="miscellaneous">
    <text>Although related to the sugar transporter family, it does not transport sugars.</text>
</comment>
<comment type="similarity">
    <text evidence="5">Belongs to the major facilitator superfamily. Phosphate:H(+) symporter (TC 2.A.1.9) family.</text>
</comment>
<accession>Q7X7V2</accession>
<accession>A0A0P0W7J3</accession>
<accession>Q56UT9</accession>
<accession>Q8H6H1</accession>
<proteinExistence type="evidence at transcript level"/>
<organism>
    <name type="scientific">Oryza sativa subsp. japonica</name>
    <name type="common">Rice</name>
    <dbReference type="NCBI Taxonomy" id="39947"/>
    <lineage>
        <taxon>Eukaryota</taxon>
        <taxon>Viridiplantae</taxon>
        <taxon>Streptophyta</taxon>
        <taxon>Embryophyta</taxon>
        <taxon>Tracheophyta</taxon>
        <taxon>Spermatophyta</taxon>
        <taxon>Magnoliopsida</taxon>
        <taxon>Liliopsida</taxon>
        <taxon>Poales</taxon>
        <taxon>Poaceae</taxon>
        <taxon>BOP clade</taxon>
        <taxon>Oryzoideae</taxon>
        <taxon>Oryzeae</taxon>
        <taxon>Oryzinae</taxon>
        <taxon>Oryza</taxon>
        <taxon>Oryza sativa</taxon>
    </lineage>
</organism>
<sequence length="548" mass="59871">MVQDRKVLDALDTAKTQWYHFTAVVIAGMGFFTDAYDLFSISLVTKLLGRIYYFNPASKSPGSLPPNVSAAVNGVAFCGTLAGQLFFGWLGDKMGRKKVYGMTLMLMVICCLASGLSFGSSAKGVMATLCFFRFWLGFGIGGDYPLSATIMSEYANKRTRGAFIAAVFAMQGFGNLTGGIVAIIVSAAFKLRFDAPAYRDDRAGSTVPQADYAWRIVLMFGAIPALLTYYWRMKMPETARYTALVAKNDKKAAADMARVLNVELVDEQEKAAAATAAAAEEEAARREQYGLFSREFARRHGHHLLGTTVCWFVLDIAYYSQNLFQKDIYTAVQWLPKADTMSALEEMFKISRAQTLVALCGTIPGYWFTVLFIDIVGRFAIQLGGFFLMTAFMLGLAVPYHHWTTPGNHVGFVVMYAFTFFFANFGPNSTTFIVPAEIFPARLRSTCHGISSAAGKMGAIVGSFGFLYAAQSTDPSKTDAGYPRGIGVRNSLFLLAGCNVVGFLFTFLVPESKGKSLEELSGENEMEAEPAAATNSYRQTVPDSGQSE</sequence>
<evidence type="ECO:0000250" key="1"/>
<evidence type="ECO:0000255" key="2"/>
<evidence type="ECO:0000256" key="3">
    <source>
        <dbReference type="SAM" id="MobiDB-lite"/>
    </source>
</evidence>
<evidence type="ECO:0000269" key="4">
    <source>
    </source>
</evidence>
<evidence type="ECO:0000305" key="5"/>
<feature type="chain" id="PRO_0000365485" description="Probable inorganic phosphate transporter 1-5">
    <location>
        <begin position="1"/>
        <end position="548"/>
    </location>
</feature>
<feature type="topological domain" description="Cytoplasmic" evidence="2">
    <location>
        <begin position="1"/>
        <end position="23"/>
    </location>
</feature>
<feature type="transmembrane region" description="Helical" evidence="2">
    <location>
        <begin position="24"/>
        <end position="44"/>
    </location>
</feature>
<feature type="topological domain" description="Extracellular" evidence="2">
    <location>
        <begin position="45"/>
        <end position="69"/>
    </location>
</feature>
<feature type="transmembrane region" description="Helical" evidence="2">
    <location>
        <begin position="70"/>
        <end position="90"/>
    </location>
</feature>
<feature type="topological domain" description="Cytoplasmic" evidence="2">
    <location>
        <begin position="91"/>
        <end position="98"/>
    </location>
</feature>
<feature type="transmembrane region" description="Helical" evidence="2">
    <location>
        <begin position="99"/>
        <end position="119"/>
    </location>
</feature>
<feature type="topological domain" description="Extracellular" evidence="2">
    <location>
        <begin position="120"/>
        <end position="123"/>
    </location>
</feature>
<feature type="transmembrane region" description="Helical" evidence="2">
    <location>
        <begin position="124"/>
        <end position="144"/>
    </location>
</feature>
<feature type="topological domain" description="Cytoplasmic" evidence="2">
    <location>
        <begin position="145"/>
        <end position="163"/>
    </location>
</feature>
<feature type="transmembrane region" description="Helical" evidence="2">
    <location>
        <begin position="164"/>
        <end position="184"/>
    </location>
</feature>
<feature type="topological domain" description="Extracellular" evidence="2">
    <location>
        <begin position="185"/>
        <end position="210"/>
    </location>
</feature>
<feature type="transmembrane region" description="Helical" evidence="2">
    <location>
        <begin position="211"/>
        <end position="231"/>
    </location>
</feature>
<feature type="topological domain" description="Cytoplasmic" evidence="2">
    <location>
        <begin position="232"/>
        <end position="303"/>
    </location>
</feature>
<feature type="transmembrane region" description="Helical" evidence="2">
    <location>
        <begin position="304"/>
        <end position="324"/>
    </location>
</feature>
<feature type="topological domain" description="Extracellular" evidence="2">
    <location>
        <begin position="325"/>
        <end position="355"/>
    </location>
</feature>
<feature type="transmembrane region" description="Helical" evidence="2">
    <location>
        <begin position="356"/>
        <end position="376"/>
    </location>
</feature>
<feature type="topological domain" description="Cytoplasmic" evidence="2">
    <location>
        <begin position="377"/>
        <end position="378"/>
    </location>
</feature>
<feature type="transmembrane region" description="Helical" evidence="2">
    <location>
        <begin position="379"/>
        <end position="399"/>
    </location>
</feature>
<feature type="topological domain" description="Extracellular" evidence="2">
    <location>
        <begin position="400"/>
        <end position="405"/>
    </location>
</feature>
<feature type="transmembrane region" description="Helical" evidence="2">
    <location>
        <begin position="406"/>
        <end position="426"/>
    </location>
</feature>
<feature type="topological domain" description="Cytoplasmic" evidence="2">
    <location>
        <begin position="427"/>
        <end position="449"/>
    </location>
</feature>
<feature type="transmembrane region" description="Helical" evidence="2">
    <location>
        <begin position="450"/>
        <end position="470"/>
    </location>
</feature>
<feature type="topological domain" description="Extracellular" evidence="2">
    <location>
        <begin position="471"/>
        <end position="490"/>
    </location>
</feature>
<feature type="transmembrane region" description="Helical" evidence="2">
    <location>
        <begin position="491"/>
        <end position="511"/>
    </location>
</feature>
<feature type="topological domain" description="Cytoplasmic" evidence="2">
    <location>
        <begin position="512"/>
        <end position="548"/>
    </location>
</feature>
<feature type="region of interest" description="Disordered" evidence="3">
    <location>
        <begin position="518"/>
        <end position="548"/>
    </location>
</feature>
<feature type="compositionally biased region" description="Polar residues" evidence="3">
    <location>
        <begin position="533"/>
        <end position="548"/>
    </location>
</feature>
<feature type="sequence conflict" description="In Ref. 2; AAU84429." evidence="5" ref="2">
    <original>D</original>
    <variation>G</variation>
    <location>
        <position position="200"/>
    </location>
</feature>
<feature type="sequence conflict" description="In Ref. 1; AAN39046." evidence="5" ref="1">
    <location>
        <begin position="207"/>
        <end position="209"/>
    </location>
</feature>
<feature type="sequence conflict" description="In Ref. 2; AAU84429." evidence="5" ref="2">
    <original>M</original>
    <variation>T</variation>
    <location>
        <position position="393"/>
    </location>
</feature>
<protein>
    <recommendedName>
        <fullName>Probable inorganic phosphate transporter 1-5</fullName>
        <shortName>OsPT5</shortName>
        <shortName>OsPht1;5</shortName>
    </recommendedName>
    <alternativeName>
        <fullName>H(+)/Pi cotransporter</fullName>
    </alternativeName>
</protein>
<dbReference type="EMBL" id="AF536965">
    <property type="protein sequence ID" value="AAN39046.1"/>
    <property type="molecule type" value="Genomic_DNA"/>
</dbReference>
<dbReference type="EMBL" id="AY569610">
    <property type="protein sequence ID" value="AAU84429.1"/>
    <property type="molecule type" value="mRNA"/>
</dbReference>
<dbReference type="EMBL" id="AL731620">
    <property type="protein sequence ID" value="CAE02519.2"/>
    <property type="molecule type" value="Genomic_DNA"/>
</dbReference>
<dbReference type="EMBL" id="AP008210">
    <property type="protein sequence ID" value="BAF14107.1"/>
    <property type="molecule type" value="Genomic_DNA"/>
</dbReference>
<dbReference type="EMBL" id="AP014960">
    <property type="protein sequence ID" value="BAS87997.1"/>
    <property type="molecule type" value="Genomic_DNA"/>
</dbReference>
<dbReference type="EMBL" id="CM000141">
    <property type="protein sequence ID" value="EAZ29898.1"/>
    <property type="molecule type" value="Genomic_DNA"/>
</dbReference>
<dbReference type="RefSeq" id="XP_015635984.1">
    <property type="nucleotide sequence ID" value="XM_015780498.1"/>
</dbReference>
<dbReference type="SMR" id="Q7X7V2"/>
<dbReference type="FunCoup" id="Q7X7V2">
    <property type="interactions" value="333"/>
</dbReference>
<dbReference type="STRING" id="39947.Q7X7V2"/>
<dbReference type="PaxDb" id="39947-Q7X7V2"/>
<dbReference type="EnsemblPlants" id="Os04t0185600-00">
    <property type="protein sequence ID" value="Os04t0185600-00"/>
    <property type="gene ID" value="Os04g0185600"/>
</dbReference>
<dbReference type="Gramene" id="Os04t0185600-00">
    <property type="protein sequence ID" value="Os04t0185600-00"/>
    <property type="gene ID" value="Os04g0185600"/>
</dbReference>
<dbReference type="KEGG" id="dosa:Os04g0185600"/>
<dbReference type="eggNOG" id="KOG0252">
    <property type="taxonomic scope" value="Eukaryota"/>
</dbReference>
<dbReference type="HOGENOM" id="CLU_001265_46_14_1"/>
<dbReference type="InParanoid" id="Q7X7V2"/>
<dbReference type="OMA" id="MIMVLCC"/>
<dbReference type="OrthoDB" id="433512at2759"/>
<dbReference type="Proteomes" id="UP000000763">
    <property type="component" value="Chromosome 4"/>
</dbReference>
<dbReference type="Proteomes" id="UP000007752">
    <property type="component" value="Chromosome 4"/>
</dbReference>
<dbReference type="Proteomes" id="UP000059680">
    <property type="component" value="Chromosome 4"/>
</dbReference>
<dbReference type="GO" id="GO:0016020">
    <property type="term" value="C:membrane"/>
    <property type="evidence" value="ECO:0007669"/>
    <property type="project" value="UniProtKB-SubCell"/>
</dbReference>
<dbReference type="GO" id="GO:0005315">
    <property type="term" value="F:phosphate transmembrane transporter activity"/>
    <property type="evidence" value="ECO:0007669"/>
    <property type="project" value="InterPro"/>
</dbReference>
<dbReference type="GO" id="GO:0015293">
    <property type="term" value="F:symporter activity"/>
    <property type="evidence" value="ECO:0007669"/>
    <property type="project" value="UniProtKB-KW"/>
</dbReference>
<dbReference type="GO" id="GO:0006817">
    <property type="term" value="P:phosphate ion transport"/>
    <property type="evidence" value="ECO:0007669"/>
    <property type="project" value="UniProtKB-KW"/>
</dbReference>
<dbReference type="CDD" id="cd17364">
    <property type="entry name" value="MFS_PhT"/>
    <property type="match status" value="1"/>
</dbReference>
<dbReference type="FunFam" id="1.20.1250.20:FF:000175">
    <property type="entry name" value="Inorganic phosphate transporter 1-6"/>
    <property type="match status" value="1"/>
</dbReference>
<dbReference type="Gene3D" id="1.20.1250.20">
    <property type="entry name" value="MFS general substrate transporter like domains"/>
    <property type="match status" value="2"/>
</dbReference>
<dbReference type="InterPro" id="IPR020846">
    <property type="entry name" value="MFS_dom"/>
</dbReference>
<dbReference type="InterPro" id="IPR005828">
    <property type="entry name" value="MFS_sugar_transport-like"/>
</dbReference>
<dbReference type="InterPro" id="IPR036259">
    <property type="entry name" value="MFS_trans_sf"/>
</dbReference>
<dbReference type="InterPro" id="IPR004738">
    <property type="entry name" value="Phos_permease"/>
</dbReference>
<dbReference type="NCBIfam" id="TIGR00887">
    <property type="entry name" value="2A0109"/>
    <property type="match status" value="1"/>
</dbReference>
<dbReference type="PANTHER" id="PTHR24064">
    <property type="entry name" value="SOLUTE CARRIER FAMILY 22 MEMBER"/>
    <property type="match status" value="1"/>
</dbReference>
<dbReference type="Pfam" id="PF00083">
    <property type="entry name" value="Sugar_tr"/>
    <property type="match status" value="1"/>
</dbReference>
<dbReference type="SUPFAM" id="SSF103473">
    <property type="entry name" value="MFS general substrate transporter"/>
    <property type="match status" value="1"/>
</dbReference>
<dbReference type="PROSITE" id="PS50850">
    <property type="entry name" value="MFS"/>
    <property type="match status" value="1"/>
</dbReference>
<name>PHT15_ORYSJ</name>
<gene>
    <name type="primary">PHT1-5</name>
    <name type="synonym">PT5</name>
    <name type="ordered locus">Os04g0185600</name>
    <name type="ordered locus">LOC_Os04g10690</name>
    <name type="ORF">OsJ_013381</name>
    <name type="ORF">OSJNBb0003A12.6</name>
</gene>
<keyword id="KW-0472">Membrane</keyword>
<keyword id="KW-0592">Phosphate transport</keyword>
<keyword id="KW-1185">Reference proteome</keyword>
<keyword id="KW-0769">Symport</keyword>
<keyword id="KW-0812">Transmembrane</keyword>
<keyword id="KW-1133">Transmembrane helix</keyword>
<keyword id="KW-0813">Transport</keyword>